<comment type="function">
    <text evidence="1">Globally modulates RNA abundance by binding to RNase E (Rne) and regulating its endonucleolytic activity. Can modulate Rne action in a substrate-dependent manner by altering the composition of the degradosome. Modulates RNA-binding and helicase activities of the degradosome.</text>
</comment>
<comment type="subunit">
    <text evidence="1">Homotrimer. Binds to both RNA-binding sites in the C-terminal region of Rne and to RhlB.</text>
</comment>
<comment type="subcellular location">
    <subcellularLocation>
        <location evidence="1">Cytoplasm</location>
    </subcellularLocation>
</comment>
<comment type="similarity">
    <text evidence="1">Belongs to the RraA family.</text>
</comment>
<gene>
    <name evidence="1" type="primary">rraA</name>
    <name type="ordered locus">HSM_0084</name>
</gene>
<organism>
    <name type="scientific">Histophilus somni (strain 2336)</name>
    <name type="common">Haemophilus somnus</name>
    <dbReference type="NCBI Taxonomy" id="228400"/>
    <lineage>
        <taxon>Bacteria</taxon>
        <taxon>Pseudomonadati</taxon>
        <taxon>Pseudomonadota</taxon>
        <taxon>Gammaproteobacteria</taxon>
        <taxon>Pasteurellales</taxon>
        <taxon>Pasteurellaceae</taxon>
        <taxon>Histophilus</taxon>
    </lineage>
</organism>
<dbReference type="EMBL" id="CP000947">
    <property type="protein sequence ID" value="ACA32512.1"/>
    <property type="molecule type" value="Genomic_DNA"/>
</dbReference>
<dbReference type="RefSeq" id="WP_012341649.1">
    <property type="nucleotide sequence ID" value="NC_010519.1"/>
</dbReference>
<dbReference type="SMR" id="B0UV42"/>
<dbReference type="STRING" id="228400.HSM_0084"/>
<dbReference type="GeneID" id="31486361"/>
<dbReference type="KEGG" id="hsm:HSM_0084"/>
<dbReference type="HOGENOM" id="CLU_072626_4_0_6"/>
<dbReference type="GO" id="GO:0005737">
    <property type="term" value="C:cytoplasm"/>
    <property type="evidence" value="ECO:0007669"/>
    <property type="project" value="UniProtKB-SubCell"/>
</dbReference>
<dbReference type="GO" id="GO:0060698">
    <property type="term" value="F:endoribonuclease inhibitor activity"/>
    <property type="evidence" value="ECO:0007669"/>
    <property type="project" value="UniProtKB-UniRule"/>
</dbReference>
<dbReference type="GO" id="GO:0019899">
    <property type="term" value="F:enzyme binding"/>
    <property type="evidence" value="ECO:0007669"/>
    <property type="project" value="UniProtKB-UniRule"/>
</dbReference>
<dbReference type="GO" id="GO:0051252">
    <property type="term" value="P:regulation of RNA metabolic process"/>
    <property type="evidence" value="ECO:0007669"/>
    <property type="project" value="InterPro"/>
</dbReference>
<dbReference type="CDD" id="cd16841">
    <property type="entry name" value="RraA_family"/>
    <property type="match status" value="1"/>
</dbReference>
<dbReference type="Gene3D" id="3.50.30.40">
    <property type="entry name" value="Ribonuclease E inhibitor RraA/RraA-like"/>
    <property type="match status" value="1"/>
</dbReference>
<dbReference type="HAMAP" id="MF_00471">
    <property type="entry name" value="RraA"/>
    <property type="match status" value="1"/>
</dbReference>
<dbReference type="InterPro" id="IPR010203">
    <property type="entry name" value="RraA"/>
</dbReference>
<dbReference type="InterPro" id="IPR005493">
    <property type="entry name" value="RraA/RraA-like"/>
</dbReference>
<dbReference type="InterPro" id="IPR036704">
    <property type="entry name" value="RraA/RraA-like_sf"/>
</dbReference>
<dbReference type="InterPro" id="IPR014339">
    <property type="entry name" value="RraA_gpbac"/>
</dbReference>
<dbReference type="NCBIfam" id="TIGR01935">
    <property type="entry name" value="NOT-MenG"/>
    <property type="match status" value="1"/>
</dbReference>
<dbReference type="NCBIfam" id="NF006875">
    <property type="entry name" value="PRK09372.1"/>
    <property type="match status" value="1"/>
</dbReference>
<dbReference type="NCBIfam" id="TIGR02998">
    <property type="entry name" value="RraA_entero"/>
    <property type="match status" value="1"/>
</dbReference>
<dbReference type="PANTHER" id="PTHR33254">
    <property type="entry name" value="4-HYDROXY-4-METHYL-2-OXOGLUTARATE ALDOLASE 3-RELATED"/>
    <property type="match status" value="1"/>
</dbReference>
<dbReference type="PANTHER" id="PTHR33254:SF29">
    <property type="entry name" value="REGULATOR OF RIBONUCLEASE ACTIVITY A"/>
    <property type="match status" value="1"/>
</dbReference>
<dbReference type="Pfam" id="PF03737">
    <property type="entry name" value="RraA-like"/>
    <property type="match status" value="1"/>
</dbReference>
<dbReference type="SUPFAM" id="SSF89562">
    <property type="entry name" value="RraA-like"/>
    <property type="match status" value="1"/>
</dbReference>
<proteinExistence type="inferred from homology"/>
<feature type="chain" id="PRO_1000081207" description="Regulator of ribonuclease activity A">
    <location>
        <begin position="1"/>
        <end position="166"/>
    </location>
</feature>
<evidence type="ECO:0000255" key="1">
    <source>
        <dbReference type="HAMAP-Rule" id="MF_00471"/>
    </source>
</evidence>
<sequence>MYIDTAELCDIYLDQIDVVEPIFSSFGGKSTFFGKITTIKCFENNGLISEILEENGEGRVLLIDGGGAVRRALIDANLAQLAADNGWEGIIVYGAIRQLQQLENINIGIQALAPIPVGSDEQSIGETDVPVNFGGVTFFPDDYIYADLTGIILSQEPLDLEEFDSL</sequence>
<keyword id="KW-0963">Cytoplasm</keyword>
<protein>
    <recommendedName>
        <fullName evidence="1">Regulator of ribonuclease activity A</fullName>
    </recommendedName>
</protein>
<accession>B0UV42</accession>
<name>RRAA_HISS2</name>
<reference key="1">
    <citation type="submission" date="2008-02" db="EMBL/GenBank/DDBJ databases">
        <title>Complete sequence of Haemophilus somnus 2336.</title>
        <authorList>
            <consortium name="US DOE Joint Genome Institute"/>
            <person name="Siddaramappa S."/>
            <person name="Duncan A.J."/>
            <person name="Challacombe J.F."/>
            <person name="Rainey D."/>
            <person name="Gillaspy A.F."/>
            <person name="Carson M."/>
            <person name="Gipson J."/>
            <person name="Gipson M."/>
            <person name="Bruce D."/>
            <person name="Detter J.C."/>
            <person name="Han C.S."/>
            <person name="Land M."/>
            <person name="Tapia R."/>
            <person name="Thompson L.S."/>
            <person name="Orvis J."/>
            <person name="Zaitshik J."/>
            <person name="Barnes G."/>
            <person name="Brettin T.S."/>
            <person name="Dyer D.W."/>
            <person name="Inzana T.J."/>
        </authorList>
    </citation>
    <scope>NUCLEOTIDE SEQUENCE [LARGE SCALE GENOMIC DNA]</scope>
    <source>
        <strain>2336</strain>
    </source>
</reference>